<protein>
    <recommendedName>
        <fullName evidence="1">Large ribosomal subunit protein bL35</fullName>
    </recommendedName>
    <alternativeName>
        <fullName evidence="3">50S ribosomal protein L35</fullName>
    </alternativeName>
</protein>
<proteinExistence type="inferred from homology"/>
<organism>
    <name type="scientific">Mycobacterium ulcerans (strain Agy99)</name>
    <dbReference type="NCBI Taxonomy" id="362242"/>
    <lineage>
        <taxon>Bacteria</taxon>
        <taxon>Bacillati</taxon>
        <taxon>Actinomycetota</taxon>
        <taxon>Actinomycetes</taxon>
        <taxon>Mycobacteriales</taxon>
        <taxon>Mycobacteriaceae</taxon>
        <taxon>Mycobacterium</taxon>
        <taxon>Mycobacterium ulcerans group</taxon>
    </lineage>
</organism>
<reference key="1">
    <citation type="journal article" date="2007" name="Genome Res.">
        <title>Reductive evolution and niche adaptation inferred from the genome of Mycobacterium ulcerans, the causative agent of Buruli ulcer.</title>
        <authorList>
            <person name="Stinear T.P."/>
            <person name="Seemann T."/>
            <person name="Pidot S."/>
            <person name="Frigui W."/>
            <person name="Reysset G."/>
            <person name="Garnier T."/>
            <person name="Meurice G."/>
            <person name="Simon D."/>
            <person name="Bouchier C."/>
            <person name="Ma L."/>
            <person name="Tichit M."/>
            <person name="Porter J.L."/>
            <person name="Ryan J."/>
            <person name="Johnson P.D.R."/>
            <person name="Davies J.K."/>
            <person name="Jenkin G.A."/>
            <person name="Small P.L.C."/>
            <person name="Jones L.M."/>
            <person name="Tekaia F."/>
            <person name="Laval F."/>
            <person name="Daffe M."/>
            <person name="Parkhill J."/>
            <person name="Cole S.T."/>
        </authorList>
    </citation>
    <scope>NUCLEOTIDE SEQUENCE [LARGE SCALE GENOMIC DNA]</scope>
    <source>
        <strain>Agy99</strain>
    </source>
</reference>
<keyword id="KW-0687">Ribonucleoprotein</keyword>
<keyword id="KW-0689">Ribosomal protein</keyword>
<comment type="similarity">
    <text evidence="1">Belongs to the bacterial ribosomal protein bL35 family.</text>
</comment>
<gene>
    <name evidence="1" type="primary">rpmI</name>
    <name type="ordered locus">MUL_1628</name>
</gene>
<evidence type="ECO:0000255" key="1">
    <source>
        <dbReference type="HAMAP-Rule" id="MF_00514"/>
    </source>
</evidence>
<evidence type="ECO:0000256" key="2">
    <source>
        <dbReference type="SAM" id="MobiDB-lite"/>
    </source>
</evidence>
<evidence type="ECO:0000305" key="3"/>
<feature type="chain" id="PRO_1000050724" description="Large ribosomal subunit protein bL35">
    <location>
        <begin position="1"/>
        <end position="64"/>
    </location>
</feature>
<feature type="region of interest" description="Disordered" evidence="2">
    <location>
        <begin position="1"/>
        <end position="64"/>
    </location>
</feature>
<feature type="compositionally biased region" description="Basic residues" evidence="2">
    <location>
        <begin position="1"/>
        <end position="42"/>
    </location>
</feature>
<name>RL35_MYCUA</name>
<dbReference type="EMBL" id="CP000325">
    <property type="protein sequence ID" value="ABL04128.1"/>
    <property type="molecule type" value="Genomic_DNA"/>
</dbReference>
<dbReference type="RefSeq" id="WP_011739748.1">
    <property type="nucleotide sequence ID" value="NC_008611.1"/>
</dbReference>
<dbReference type="SMR" id="A0PP59"/>
<dbReference type="GeneID" id="93437327"/>
<dbReference type="KEGG" id="mul:MUL_1628"/>
<dbReference type="eggNOG" id="COG0291">
    <property type="taxonomic scope" value="Bacteria"/>
</dbReference>
<dbReference type="HOGENOM" id="CLU_169643_4_2_11"/>
<dbReference type="Proteomes" id="UP000000765">
    <property type="component" value="Chromosome"/>
</dbReference>
<dbReference type="GO" id="GO:0022625">
    <property type="term" value="C:cytosolic large ribosomal subunit"/>
    <property type="evidence" value="ECO:0007669"/>
    <property type="project" value="TreeGrafter"/>
</dbReference>
<dbReference type="GO" id="GO:0003735">
    <property type="term" value="F:structural constituent of ribosome"/>
    <property type="evidence" value="ECO:0007669"/>
    <property type="project" value="InterPro"/>
</dbReference>
<dbReference type="GO" id="GO:0006412">
    <property type="term" value="P:translation"/>
    <property type="evidence" value="ECO:0007669"/>
    <property type="project" value="UniProtKB-UniRule"/>
</dbReference>
<dbReference type="FunFam" id="4.10.410.60:FF:000001">
    <property type="entry name" value="50S ribosomal protein L35"/>
    <property type="match status" value="1"/>
</dbReference>
<dbReference type="Gene3D" id="4.10.410.60">
    <property type="match status" value="1"/>
</dbReference>
<dbReference type="HAMAP" id="MF_00514">
    <property type="entry name" value="Ribosomal_bL35"/>
    <property type="match status" value="1"/>
</dbReference>
<dbReference type="InterPro" id="IPR001706">
    <property type="entry name" value="Ribosomal_bL35"/>
</dbReference>
<dbReference type="InterPro" id="IPR021137">
    <property type="entry name" value="Ribosomal_bL35-like"/>
</dbReference>
<dbReference type="InterPro" id="IPR018265">
    <property type="entry name" value="Ribosomal_bL35_CS"/>
</dbReference>
<dbReference type="InterPro" id="IPR037229">
    <property type="entry name" value="Ribosomal_bL35_sf"/>
</dbReference>
<dbReference type="NCBIfam" id="TIGR00001">
    <property type="entry name" value="rpmI_bact"/>
    <property type="match status" value="1"/>
</dbReference>
<dbReference type="PANTHER" id="PTHR33343">
    <property type="entry name" value="54S RIBOSOMAL PROTEIN BL35M"/>
    <property type="match status" value="1"/>
</dbReference>
<dbReference type="PANTHER" id="PTHR33343:SF1">
    <property type="entry name" value="LARGE RIBOSOMAL SUBUNIT PROTEIN BL35M"/>
    <property type="match status" value="1"/>
</dbReference>
<dbReference type="Pfam" id="PF01632">
    <property type="entry name" value="Ribosomal_L35p"/>
    <property type="match status" value="1"/>
</dbReference>
<dbReference type="PRINTS" id="PR00064">
    <property type="entry name" value="RIBOSOMALL35"/>
</dbReference>
<dbReference type="SUPFAM" id="SSF143034">
    <property type="entry name" value="L35p-like"/>
    <property type="match status" value="1"/>
</dbReference>
<dbReference type="PROSITE" id="PS00936">
    <property type="entry name" value="RIBOSOMAL_L35"/>
    <property type="match status" value="1"/>
</dbReference>
<accession>A0PP59</accession>
<sequence>MPKAKTHSGASKRFRRTGTGKIVRQKANRRHLLEHKSSKRTRRLDGRTTVAANDTKRVKSLLNG</sequence>